<organism>
    <name type="scientific">Paraclostridium sordellii</name>
    <name type="common">Clostridium sordellii</name>
    <dbReference type="NCBI Taxonomy" id="1505"/>
    <lineage>
        <taxon>Bacteria</taxon>
        <taxon>Bacillati</taxon>
        <taxon>Bacillota</taxon>
        <taxon>Clostridia</taxon>
        <taxon>Peptostreptococcales</taxon>
        <taxon>Peptostreptococcaceae</taxon>
        <taxon>Paraclostridium</taxon>
    </lineage>
</organism>
<proteinExistence type="inferred from homology"/>
<reference key="1">
    <citation type="submission" date="2013-10" db="EMBL/GenBank/DDBJ databases">
        <title>Clostridium sordellii variant toxins TcsL9048 and TcsH9048, gene characterization and comparative analysis of substrate specificity of the large clostridial glucosylating toxins.</title>
        <authorList>
            <person name="Popoff M.-R."/>
            <person name="Pauillac S."/>
            <person name="Bouvet P."/>
            <person name="Just I."/>
            <person name="Genth H."/>
            <person name="Bouchier C."/>
        </authorList>
    </citation>
    <scope>NUCLEOTIDE SEQUENCE [GENOMIC DNA]</scope>
    <source>
        <strain evidence="5">VPI 9048</strain>
    </source>
</reference>
<reference key="2">
    <citation type="journal article" date="2013" name="J. Bacteriol.">
        <title>Identification and characterization of Clostridium sordellii toxin gene regulator.</title>
        <authorList>
            <person name="Sirigi Reddy A.R."/>
            <person name="Girinathan B.P."/>
            <person name="Zapotocny R."/>
            <person name="Govind R."/>
        </authorList>
    </citation>
    <scope>FUNCTION</scope>
    <source>
        <strain>VPI 9048</strain>
    </source>
</reference>
<feature type="chain" id="PRO_0000451204" description="RNA polymerase sigma factor TcsR">
    <location>
        <begin position="1"/>
        <end position="173"/>
    </location>
</feature>
<feature type="DNA-binding region" description="H-T-H motif" evidence="4">
    <location>
        <begin position="143"/>
        <end position="162"/>
    </location>
</feature>
<feature type="region of interest" description="Sigma-70 factor domain-4" evidence="1">
    <location>
        <begin position="122"/>
        <end position="169"/>
    </location>
</feature>
<gene>
    <name evidence="3" type="primary">tcsR</name>
</gene>
<dbReference type="EMBL" id="KF726113">
    <property type="protein sequence ID" value="AHB59890.1"/>
    <property type="molecule type" value="Genomic_DNA"/>
</dbReference>
<dbReference type="RefSeq" id="WP_021127582.1">
    <property type="nucleotide sequence ID" value="NZ_MG205642.1"/>
</dbReference>
<dbReference type="SMR" id="P0DUB5"/>
<dbReference type="GO" id="GO:0003677">
    <property type="term" value="F:DNA binding"/>
    <property type="evidence" value="ECO:0007669"/>
    <property type="project" value="UniProtKB-KW"/>
</dbReference>
<dbReference type="GO" id="GO:0016987">
    <property type="term" value="F:sigma factor activity"/>
    <property type="evidence" value="ECO:0007669"/>
    <property type="project" value="UniProtKB-KW"/>
</dbReference>
<dbReference type="GO" id="GO:0006352">
    <property type="term" value="P:DNA-templated transcription initiation"/>
    <property type="evidence" value="ECO:0007669"/>
    <property type="project" value="InterPro"/>
</dbReference>
<dbReference type="CDD" id="cd06171">
    <property type="entry name" value="Sigma70_r4"/>
    <property type="match status" value="1"/>
</dbReference>
<dbReference type="Gene3D" id="1.20.140.160">
    <property type="match status" value="1"/>
</dbReference>
<dbReference type="InterPro" id="IPR014284">
    <property type="entry name" value="RNA_pol_sigma-70_dom"/>
</dbReference>
<dbReference type="InterPro" id="IPR007630">
    <property type="entry name" value="RNA_pol_sigma70_r4"/>
</dbReference>
<dbReference type="InterPro" id="IPR013324">
    <property type="entry name" value="RNA_pol_sigma_r3/r4-like"/>
</dbReference>
<dbReference type="NCBIfam" id="TIGR02937">
    <property type="entry name" value="sigma70-ECF"/>
    <property type="match status" value="1"/>
</dbReference>
<dbReference type="Pfam" id="PF04545">
    <property type="entry name" value="Sigma70_r4"/>
    <property type="match status" value="1"/>
</dbReference>
<dbReference type="SUPFAM" id="SSF88659">
    <property type="entry name" value="Sigma3 and sigma4 domains of RNA polymerase sigma factors"/>
    <property type="match status" value="1"/>
</dbReference>
<accession>P0DUB5</accession>
<protein>
    <recommendedName>
        <fullName evidence="4">RNA polymerase sigma factor TcsR</fullName>
    </recommendedName>
</protein>
<comment type="function">
    <text evidence="2 4">Sigma factors are initiation factors that promote the attachment of RNA polymerase to specific initiation sites and are then released (Probable). Transcriptional regulator specifically required to activate expression of the toxin gene locus, composed of tcsL, tcsH and tcdE/utxA (PubMed:23873908).</text>
</comment>
<comment type="similarity">
    <text evidence="4">Belongs to the sigma-70 factor family.</text>
</comment>
<sequence length="173" mass="20736">MSNLYESIRKYKCGYIEEILNILDMFDPLLNKFQRNSCYEDMKSELSLFMFNLIDNFPLEKDCFKEDKFIINYIYKALKNKFIQVNKLHQKIKSCESNIDIVALNNCDYSNLLSFVIFEDIIKDLTQNEKNIIRKIYLDRLRESEISRELNISRQAVNKTHLRALEKLKKLIN</sequence>
<evidence type="ECO:0000255" key="1"/>
<evidence type="ECO:0000269" key="2">
    <source>
    </source>
</evidence>
<evidence type="ECO:0000303" key="3">
    <source>
    </source>
</evidence>
<evidence type="ECO:0000305" key="4"/>
<evidence type="ECO:0000312" key="5">
    <source>
        <dbReference type="EMBL" id="AHB59890.1"/>
    </source>
</evidence>
<keyword id="KW-0238">DNA-binding</keyword>
<keyword id="KW-0731">Sigma factor</keyword>
<keyword id="KW-0804">Transcription</keyword>
<keyword id="KW-0805">Transcription regulation</keyword>
<name>TCSR2_PARSO</name>